<gene>
    <name type="ordered locus">MPN_020</name>
    <name type="ORF">D12_orf1030</name>
    <name type="ORF">MP134</name>
</gene>
<proteinExistence type="inferred from homology"/>
<sequence>MTIAEIRKFAQTTQKFVEAENLFEHGNVVLPKKYLNKARGMAEVLYNSQVIKVSFTAKDGELTCKCSCLANVDNCVHIVAVLLKYHQMLVESKRSFNLAEAFHLDCDQAEMLIENLSLEIIAGGWNFKLGFTINLDKHNPQPSVLRFYCCDATFVYFLHLENDTLHSVELSKFKPEERATLLFFDKLCKQFTVGYDRNSLLFPLAGFLKELQANTEPTIFVFNDDKIDNILFLRISKKHHGLNHVCGFSGKKVFDFVTYKQKEKQIVLRSAYLSKFTDFKFPYTINIYKLQFGEPLFFYFLIQLKRDGFKNFYFQSEDSIVKEKEYLPKLYFKVEYDPVKNKFVSDAFFKYKNHFNKGTTTVYPHRYYMAKKSDRGGFNRLLFYEEAVENFYQDQFDLGYFRKFEHLPIQDKNQIEAFKAALDDLMPVDLAEVSLSDNLLHQKPLHFALSDLEAVAVDDKQIKLSFAPSAVELKLIKRILSAYHKGNVVCIDQESWYDLKQPAAKELIQFWNQFDLRNATSDGNHIYLPKYYLFEVAKIFSQYLDIKNLFDVPTIKKIEDQNNNVFDLSLEHKKITSLRNYQQEGVKWIRGLEENKFGGILADEMGLGKTVQVIFALLDSYLKNHVNLPSLIIVPASLLLNWKSEFEKFAPQIKVKVANIPSKERGELYEKLTNEILIVSFNVLRSDVKLITKQRFHYVVIDEAQGIKNDSSSITKAAKKVKGNFCLALTGTPIENRLLDLWSCFDFVLPSFLGNKKQFTDQFEKEKTDQSFHLLMQRTSPFILRRTKSKVLKELPNKITTDIYVELNPMHQKLYEEERDRGLEEIKQIQDKSSFNILTLILKLRHLCSLPKNSQGILENSAKKEAALEIIHEAIENQRKIILFTQFIDVIDHFKDTFKEQGIEYFIFDGRKSPKSRHSIIEKFNNAKNPCVLLASLKAGGVGINLTAAEVVIHFDVWWNTAVENQATDRAHRIGQKKTVQVYRIIAKNTIEERVCQVQAEKQELVSKTLVEDVNFFESLTNEELLRLFE</sequence>
<keyword id="KW-0067">ATP-binding</keyword>
<keyword id="KW-0347">Helicase</keyword>
<keyword id="KW-0378">Hydrolase</keyword>
<keyword id="KW-0479">Metal-binding</keyword>
<keyword id="KW-0547">Nucleotide-binding</keyword>
<keyword id="KW-1185">Reference proteome</keyword>
<keyword id="KW-0862">Zinc</keyword>
<keyword id="KW-0863">Zinc-finger</keyword>
<comment type="similarity">
    <text evidence="4">Belongs to the SNF2/RAD54 helicase family.</text>
</comment>
<name>Y020_MYCPN</name>
<protein>
    <recommendedName>
        <fullName>Uncharacterized ATP-dependent helicase MPN_020</fullName>
        <ecNumber>3.6.4.-</ecNumber>
    </recommendedName>
</protein>
<organism>
    <name type="scientific">Mycoplasma pneumoniae (strain ATCC 29342 / M129 / Subtype 1)</name>
    <name type="common">Mycoplasmoides pneumoniae</name>
    <dbReference type="NCBI Taxonomy" id="272634"/>
    <lineage>
        <taxon>Bacteria</taxon>
        <taxon>Bacillati</taxon>
        <taxon>Mycoplasmatota</taxon>
        <taxon>Mycoplasmoidales</taxon>
        <taxon>Mycoplasmoidaceae</taxon>
        <taxon>Mycoplasmoides</taxon>
    </lineage>
</organism>
<feature type="chain" id="PRO_0000074381" description="Uncharacterized ATP-dependent helicase MPN_020">
    <location>
        <begin position="1"/>
        <end position="1030"/>
    </location>
</feature>
<feature type="domain" description="Helicase ATP-binding" evidence="2">
    <location>
        <begin position="590"/>
        <end position="751"/>
    </location>
</feature>
<feature type="domain" description="Helicase C-terminal" evidence="3">
    <location>
        <begin position="867"/>
        <end position="1021"/>
    </location>
</feature>
<feature type="zinc finger region" description="SWIM-type" evidence="1">
    <location>
        <begin position="51"/>
        <end position="86"/>
    </location>
</feature>
<feature type="short sequence motif" description="DEAQ box">
    <location>
        <begin position="702"/>
        <end position="705"/>
    </location>
</feature>
<feature type="binding site" evidence="2">
    <location>
        <begin position="603"/>
        <end position="610"/>
    </location>
    <ligand>
        <name>ATP</name>
        <dbReference type="ChEBI" id="CHEBI:30616"/>
    </ligand>
</feature>
<evidence type="ECO:0000255" key="1">
    <source>
        <dbReference type="PROSITE-ProRule" id="PRU00325"/>
    </source>
</evidence>
<evidence type="ECO:0000255" key="2">
    <source>
        <dbReference type="PROSITE-ProRule" id="PRU00541"/>
    </source>
</evidence>
<evidence type="ECO:0000255" key="3">
    <source>
        <dbReference type="PROSITE-ProRule" id="PRU00542"/>
    </source>
</evidence>
<evidence type="ECO:0000305" key="4"/>
<reference key="1">
    <citation type="journal article" date="1996" name="Nucleic Acids Res.">
        <title>Complete sequence analysis of the genome of the bacterium Mycoplasma pneumoniae.</title>
        <authorList>
            <person name="Himmelreich R."/>
            <person name="Hilbert H."/>
            <person name="Plagens H."/>
            <person name="Pirkl E."/>
            <person name="Li B.-C."/>
            <person name="Herrmann R."/>
        </authorList>
    </citation>
    <scope>NUCLEOTIDE SEQUENCE [LARGE SCALE GENOMIC DNA]</scope>
    <source>
        <strain>ATCC 29342 / M129 / Subtype 1</strain>
    </source>
</reference>
<accession>P75093</accession>
<dbReference type="EC" id="3.6.4.-"/>
<dbReference type="EMBL" id="U00089">
    <property type="protein sequence ID" value="AAB95782.1"/>
    <property type="molecule type" value="Genomic_DNA"/>
</dbReference>
<dbReference type="PIR" id="S73460">
    <property type="entry name" value="S73460"/>
</dbReference>
<dbReference type="RefSeq" id="NP_109708.1">
    <property type="nucleotide sequence ID" value="NC_000912.1"/>
</dbReference>
<dbReference type="RefSeq" id="WP_010874377.1">
    <property type="nucleotide sequence ID" value="NZ_OU342337.1"/>
</dbReference>
<dbReference type="SMR" id="P75093"/>
<dbReference type="IntAct" id="P75093">
    <property type="interactions" value="15"/>
</dbReference>
<dbReference type="STRING" id="272634.MPN_020"/>
<dbReference type="EnsemblBacteria" id="AAB95782">
    <property type="protein sequence ID" value="AAB95782"/>
    <property type="gene ID" value="MPN_020"/>
</dbReference>
<dbReference type="KEGG" id="mpn:MPN_020"/>
<dbReference type="PATRIC" id="fig|272634.6.peg.19"/>
<dbReference type="HOGENOM" id="CLU_000315_21_1_14"/>
<dbReference type="OrthoDB" id="9760715at2"/>
<dbReference type="BioCyc" id="MPNE272634:G1GJ3-31-MONOMER"/>
<dbReference type="Proteomes" id="UP000000808">
    <property type="component" value="Chromosome"/>
</dbReference>
<dbReference type="GO" id="GO:0005524">
    <property type="term" value="F:ATP binding"/>
    <property type="evidence" value="ECO:0007669"/>
    <property type="project" value="UniProtKB-KW"/>
</dbReference>
<dbReference type="GO" id="GO:0004386">
    <property type="term" value="F:helicase activity"/>
    <property type="evidence" value="ECO:0007669"/>
    <property type="project" value="UniProtKB-KW"/>
</dbReference>
<dbReference type="GO" id="GO:0016787">
    <property type="term" value="F:hydrolase activity"/>
    <property type="evidence" value="ECO:0007669"/>
    <property type="project" value="UniProtKB-KW"/>
</dbReference>
<dbReference type="GO" id="GO:0008270">
    <property type="term" value="F:zinc ion binding"/>
    <property type="evidence" value="ECO:0007669"/>
    <property type="project" value="UniProtKB-KW"/>
</dbReference>
<dbReference type="CDD" id="cd18793">
    <property type="entry name" value="SF2_C_SNF"/>
    <property type="match status" value="1"/>
</dbReference>
<dbReference type="Gene3D" id="3.40.50.300">
    <property type="entry name" value="P-loop containing nucleotide triphosphate hydrolases"/>
    <property type="match status" value="1"/>
</dbReference>
<dbReference type="Gene3D" id="3.40.50.10810">
    <property type="entry name" value="Tandem AAA-ATPase domain"/>
    <property type="match status" value="1"/>
</dbReference>
<dbReference type="InterPro" id="IPR014001">
    <property type="entry name" value="Helicase_ATP-bd"/>
</dbReference>
<dbReference type="InterPro" id="IPR001650">
    <property type="entry name" value="Helicase_C-like"/>
</dbReference>
<dbReference type="InterPro" id="IPR027417">
    <property type="entry name" value="P-loop_NTPase"/>
</dbReference>
<dbReference type="InterPro" id="IPR038718">
    <property type="entry name" value="SNF2-like_sf"/>
</dbReference>
<dbReference type="InterPro" id="IPR049730">
    <property type="entry name" value="SNF2/RAD54-like_C"/>
</dbReference>
<dbReference type="InterPro" id="IPR000330">
    <property type="entry name" value="SNF2_N"/>
</dbReference>
<dbReference type="InterPro" id="IPR007527">
    <property type="entry name" value="Znf_SWIM"/>
</dbReference>
<dbReference type="PANTHER" id="PTHR10799">
    <property type="entry name" value="SNF2/RAD54 HELICASE FAMILY"/>
    <property type="match status" value="1"/>
</dbReference>
<dbReference type="Pfam" id="PF00271">
    <property type="entry name" value="Helicase_C"/>
    <property type="match status" value="1"/>
</dbReference>
<dbReference type="Pfam" id="PF00176">
    <property type="entry name" value="SNF2-rel_dom"/>
    <property type="match status" value="1"/>
</dbReference>
<dbReference type="Pfam" id="PF04434">
    <property type="entry name" value="SWIM"/>
    <property type="match status" value="1"/>
</dbReference>
<dbReference type="SMART" id="SM00487">
    <property type="entry name" value="DEXDc"/>
    <property type="match status" value="1"/>
</dbReference>
<dbReference type="SMART" id="SM00490">
    <property type="entry name" value="HELICc"/>
    <property type="match status" value="1"/>
</dbReference>
<dbReference type="SUPFAM" id="SSF52540">
    <property type="entry name" value="P-loop containing nucleoside triphosphate hydrolases"/>
    <property type="match status" value="2"/>
</dbReference>
<dbReference type="PROSITE" id="PS51192">
    <property type="entry name" value="HELICASE_ATP_BIND_1"/>
    <property type="match status" value="1"/>
</dbReference>
<dbReference type="PROSITE" id="PS51194">
    <property type="entry name" value="HELICASE_CTER"/>
    <property type="match status" value="1"/>
</dbReference>
<dbReference type="PROSITE" id="PS50966">
    <property type="entry name" value="ZF_SWIM"/>
    <property type="match status" value="1"/>
</dbReference>